<reference key="1">
    <citation type="journal article" date="2004" name="Nature">
        <title>Genome evolution in yeasts.</title>
        <authorList>
            <person name="Dujon B."/>
            <person name="Sherman D."/>
            <person name="Fischer G."/>
            <person name="Durrens P."/>
            <person name="Casaregola S."/>
            <person name="Lafontaine I."/>
            <person name="de Montigny J."/>
            <person name="Marck C."/>
            <person name="Neuveglise C."/>
            <person name="Talla E."/>
            <person name="Goffard N."/>
            <person name="Frangeul L."/>
            <person name="Aigle M."/>
            <person name="Anthouard V."/>
            <person name="Babour A."/>
            <person name="Barbe V."/>
            <person name="Barnay S."/>
            <person name="Blanchin S."/>
            <person name="Beckerich J.-M."/>
            <person name="Beyne E."/>
            <person name="Bleykasten C."/>
            <person name="Boisrame A."/>
            <person name="Boyer J."/>
            <person name="Cattolico L."/>
            <person name="Confanioleri F."/>
            <person name="de Daruvar A."/>
            <person name="Despons L."/>
            <person name="Fabre E."/>
            <person name="Fairhead C."/>
            <person name="Ferry-Dumazet H."/>
            <person name="Groppi A."/>
            <person name="Hantraye F."/>
            <person name="Hennequin C."/>
            <person name="Jauniaux N."/>
            <person name="Joyet P."/>
            <person name="Kachouri R."/>
            <person name="Kerrest A."/>
            <person name="Koszul R."/>
            <person name="Lemaire M."/>
            <person name="Lesur I."/>
            <person name="Ma L."/>
            <person name="Muller H."/>
            <person name="Nicaud J.-M."/>
            <person name="Nikolski M."/>
            <person name="Oztas S."/>
            <person name="Ozier-Kalogeropoulos O."/>
            <person name="Pellenz S."/>
            <person name="Potier S."/>
            <person name="Richard G.-F."/>
            <person name="Straub M.-L."/>
            <person name="Suleau A."/>
            <person name="Swennen D."/>
            <person name="Tekaia F."/>
            <person name="Wesolowski-Louvel M."/>
            <person name="Westhof E."/>
            <person name="Wirth B."/>
            <person name="Zeniou-Meyer M."/>
            <person name="Zivanovic Y."/>
            <person name="Bolotin-Fukuhara M."/>
            <person name="Thierry A."/>
            <person name="Bouchier C."/>
            <person name="Caudron B."/>
            <person name="Scarpelli C."/>
            <person name="Gaillardin C."/>
            <person name="Weissenbach J."/>
            <person name="Wincker P."/>
            <person name="Souciet J.-L."/>
        </authorList>
    </citation>
    <scope>NUCLEOTIDE SEQUENCE [LARGE SCALE GENOMIC DNA]</scope>
    <source>
        <strain>ATCC 2001 / BCRC 20586 / JCM 3761 / NBRC 0622 / NRRL Y-65 / CBS 138</strain>
    </source>
</reference>
<reference key="2">
    <citation type="journal article" date="2015" name="Cell. Microbiol.">
        <title>An essential role for phosphatidylinositol 3-kinase in the inhibition of phagosomal maturation, intracellular survival and virulence in Candida glabrata.</title>
        <authorList>
            <person name="Rai M.N."/>
            <person name="Sharma V."/>
            <person name="Balusu S."/>
            <person name="Kaur R."/>
        </authorList>
    </citation>
    <scope>FUNCTION</scope>
    <scope>CATALYTIC ACTIVITY</scope>
    <scope>MUTAGENESIS OF ASN-750</scope>
    <scope>DISRUPTION PHENOTYPE</scope>
</reference>
<comment type="function">
    <text evidence="1 5">Multifunctional phosphatidylinositol 3-kinase that plays a role in signaling in modulation of host immune response, intracellular survival and virulence (PubMed:25223215). Catalytic subunit of the autophagy-specific VPS34 PI3-kinase complex I essential to recruit the ATG8-phosphatidylinositol conjugate and the ATG12-ATG5 conjugate to the pre-autophagosomal structure (By similarity). Also involved in endosome-to-Golgi retrograde transport as part of the VPS34 PI3-kinase complex II (By similarity). This second complex is required for the endosome-to-Golgi retrieval of PEP1 and KEX2, and the recruitment of VPS5 and VPS7, two components of the retromer complex, to endosomal membranes (probably through the synthesis of a specific pool of phosphatidylinositol 3-phosphate recruiting the retromer to the endosomes) (By similarity). Finally, it might also be involved in ethanol tolerance and cell wall integrity (By similarity).</text>
</comment>
<comment type="catalytic activity">
    <reaction evidence="5">
        <text>a 1,2-diacyl-sn-glycero-3-phospho-(1D-myo-inositol) + ATP = a 1,2-diacyl-sn-glycero-3-phospho-(1D-myo-inositol-3-phosphate) + ADP + H(+)</text>
        <dbReference type="Rhea" id="RHEA:12709"/>
        <dbReference type="ChEBI" id="CHEBI:15378"/>
        <dbReference type="ChEBI" id="CHEBI:30616"/>
        <dbReference type="ChEBI" id="CHEBI:57880"/>
        <dbReference type="ChEBI" id="CHEBI:58088"/>
        <dbReference type="ChEBI" id="CHEBI:456216"/>
        <dbReference type="EC" id="2.7.1.137"/>
    </reaction>
    <physiologicalReaction direction="left-to-right" evidence="5">
        <dbReference type="Rhea" id="RHEA:12710"/>
    </physiologicalReaction>
</comment>
<comment type="subunit">
    <text evidence="1">Component of the autophagy-specific VPS34 PI3-kinase complex I composed of VPS15, VPS30, VPS34, ATG14 and ATG38; and of the VPS34 PI3-kinase complex II composed of VPS15, VPS30, VPS34 and VPS38.</text>
</comment>
<comment type="subcellular location">
    <subcellularLocation>
        <location evidence="1">Golgi apparatus</location>
        <location evidence="1">trans-Golgi network membrane</location>
        <topology evidence="1">Peripheral membrane protein</topology>
    </subcellularLocation>
    <subcellularLocation>
        <location evidence="1">Endosome membrane</location>
        <topology evidence="1">Peripheral membrane protein</topology>
    </subcellularLocation>
</comment>
<comment type="PTM">
    <text evidence="1">Autophosphorylated.</text>
</comment>
<comment type="disruption phenotype">
    <text evidence="5">Leads to large vacuoles and defective respiratory growth (PubMed:25223215). Blocks maturation of the phagosomes and renders cells hyperadherent to epithelial cells and susceptible to the antimicrobial arsenal of primary murine and cultured human macrophages, as well as to thermal, salt, oxidative, genotoxic, cell wall and cell membrane stresses (PubMed:25223215). Displays defects in protein trafficking (PubMed:25223215).</text>
</comment>
<comment type="similarity">
    <text evidence="4">Belongs to the PI3/PI4-kinase family. Type III PI4K subfamily.</text>
</comment>
<accession>Q6FSR7</accession>
<dbReference type="EC" id="2.7.1.137" evidence="5"/>
<dbReference type="EMBL" id="CR380953">
    <property type="protein sequence ID" value="CAG59654.1"/>
    <property type="molecule type" value="Genomic_DNA"/>
</dbReference>
<dbReference type="RefSeq" id="XP_446727.1">
    <property type="nucleotide sequence ID" value="XM_446727.1"/>
</dbReference>
<dbReference type="SMR" id="Q6FSR7"/>
<dbReference type="FunCoup" id="Q6FSR7">
    <property type="interactions" value="887"/>
</dbReference>
<dbReference type="STRING" id="284593.Q6FSR7"/>
<dbReference type="EnsemblFungi" id="CAGL0G08360g-T">
    <property type="protein sequence ID" value="CAGL0G08360g-T-p1"/>
    <property type="gene ID" value="CAGL0G08360g"/>
</dbReference>
<dbReference type="GeneID" id="2888117"/>
<dbReference type="KEGG" id="cgr:2888117"/>
<dbReference type="CGD" id="CAL0137717">
    <property type="gene designation" value="VPS34"/>
</dbReference>
<dbReference type="VEuPathDB" id="FungiDB:CAGL0G08360g"/>
<dbReference type="eggNOG" id="KOG0906">
    <property type="taxonomic scope" value="Eukaryota"/>
</dbReference>
<dbReference type="HOGENOM" id="CLU_004869_0_0_1"/>
<dbReference type="InParanoid" id="Q6FSR7"/>
<dbReference type="PHI-base" id="PHI:3287"/>
<dbReference type="Proteomes" id="UP000002428">
    <property type="component" value="Chromosome G"/>
</dbReference>
<dbReference type="GO" id="GO:0010008">
    <property type="term" value="C:endosome membrane"/>
    <property type="evidence" value="ECO:0007669"/>
    <property type="project" value="UniProtKB-SubCell"/>
</dbReference>
<dbReference type="GO" id="GO:0005576">
    <property type="term" value="C:extracellular region"/>
    <property type="evidence" value="ECO:0000314"/>
    <property type="project" value="CGD"/>
</dbReference>
<dbReference type="GO" id="GO:0000329">
    <property type="term" value="C:fungal-type vacuole membrane"/>
    <property type="evidence" value="ECO:0007669"/>
    <property type="project" value="EnsemblFungi"/>
</dbReference>
<dbReference type="GO" id="GO:0005794">
    <property type="term" value="C:Golgi apparatus"/>
    <property type="evidence" value="ECO:0007669"/>
    <property type="project" value="UniProtKB-SubCell"/>
</dbReference>
<dbReference type="GO" id="GO:0071561">
    <property type="term" value="C:nucleus-vacuole junction"/>
    <property type="evidence" value="ECO:0007669"/>
    <property type="project" value="EnsemblFungi"/>
</dbReference>
<dbReference type="GO" id="GO:0005777">
    <property type="term" value="C:peroxisome"/>
    <property type="evidence" value="ECO:0007669"/>
    <property type="project" value="EnsemblFungi"/>
</dbReference>
<dbReference type="GO" id="GO:0000407">
    <property type="term" value="C:phagophore assembly site"/>
    <property type="evidence" value="ECO:0007669"/>
    <property type="project" value="EnsemblFungi"/>
</dbReference>
<dbReference type="GO" id="GO:0034271">
    <property type="term" value="C:phosphatidylinositol 3-kinase complex, class III, type I"/>
    <property type="evidence" value="ECO:0007669"/>
    <property type="project" value="EnsemblFungi"/>
</dbReference>
<dbReference type="GO" id="GO:0034272">
    <property type="term" value="C:phosphatidylinositol 3-kinase complex, class III, type II"/>
    <property type="evidence" value="ECO:0007669"/>
    <property type="project" value="EnsemblFungi"/>
</dbReference>
<dbReference type="GO" id="GO:0016303">
    <property type="term" value="F:1-phosphatidylinositol-3-kinase activity"/>
    <property type="evidence" value="ECO:0000315"/>
    <property type="project" value="CGD"/>
</dbReference>
<dbReference type="GO" id="GO:0005524">
    <property type="term" value="F:ATP binding"/>
    <property type="evidence" value="ECO:0007669"/>
    <property type="project" value="UniProtKB-KW"/>
</dbReference>
<dbReference type="GO" id="GO:0004672">
    <property type="term" value="F:protein kinase activity"/>
    <property type="evidence" value="ECO:0007669"/>
    <property type="project" value="EnsemblFungi"/>
</dbReference>
<dbReference type="GO" id="GO:0032120">
    <property type="term" value="P:ascospore-type prospore membrane formation"/>
    <property type="evidence" value="ECO:0007669"/>
    <property type="project" value="EnsemblFungi"/>
</dbReference>
<dbReference type="GO" id="GO:0000045">
    <property type="term" value="P:autophagosome assembly"/>
    <property type="evidence" value="ECO:0007669"/>
    <property type="project" value="TreeGrafter"/>
</dbReference>
<dbReference type="GO" id="GO:0051365">
    <property type="term" value="P:cellular response to potassium ion starvation"/>
    <property type="evidence" value="ECO:0007669"/>
    <property type="project" value="EnsemblFungi"/>
</dbReference>
<dbReference type="GO" id="GO:0006897">
    <property type="term" value="P:endocytosis"/>
    <property type="evidence" value="ECO:0007669"/>
    <property type="project" value="TreeGrafter"/>
</dbReference>
<dbReference type="GO" id="GO:0006879">
    <property type="term" value="P:intracellular iron ion homeostasis"/>
    <property type="evidence" value="ECO:0000315"/>
    <property type="project" value="CGD"/>
</dbReference>
<dbReference type="GO" id="GO:0034755">
    <property type="term" value="P:iron ion transmembrane transport"/>
    <property type="evidence" value="ECO:0000315"/>
    <property type="project" value="CGD"/>
</dbReference>
<dbReference type="GO" id="GO:0000425">
    <property type="term" value="P:pexophagy"/>
    <property type="evidence" value="ECO:0007669"/>
    <property type="project" value="EnsemblFungi"/>
</dbReference>
<dbReference type="GO" id="GO:0048015">
    <property type="term" value="P:phosphatidylinositol-mediated signaling"/>
    <property type="evidence" value="ECO:0007669"/>
    <property type="project" value="TreeGrafter"/>
</dbReference>
<dbReference type="GO" id="GO:0048227">
    <property type="term" value="P:plasma membrane to endosome transport"/>
    <property type="evidence" value="ECO:0000314"/>
    <property type="project" value="CGD"/>
</dbReference>
<dbReference type="GO" id="GO:0032968">
    <property type="term" value="P:positive regulation of transcription elongation by RNA polymerase II"/>
    <property type="evidence" value="ECO:0007669"/>
    <property type="project" value="EnsemblFungi"/>
</dbReference>
<dbReference type="GO" id="GO:0072665">
    <property type="term" value="P:protein localization to vacuole"/>
    <property type="evidence" value="ECO:0000315"/>
    <property type="project" value="CGD"/>
</dbReference>
<dbReference type="CDD" id="cd08397">
    <property type="entry name" value="C2_PI3K_class_III"/>
    <property type="match status" value="1"/>
</dbReference>
<dbReference type="CDD" id="cd00870">
    <property type="entry name" value="PI3Ka_III"/>
    <property type="match status" value="1"/>
</dbReference>
<dbReference type="CDD" id="cd00896">
    <property type="entry name" value="PI3Kc_III"/>
    <property type="match status" value="1"/>
</dbReference>
<dbReference type="FunFam" id="1.10.1070.11:FF:000002">
    <property type="entry name" value="Phosphatidylinositol 3-kinase catalytic subunit type 3"/>
    <property type="match status" value="1"/>
</dbReference>
<dbReference type="FunFam" id="3.30.1010.10:FF:000016">
    <property type="entry name" value="Phosphatidylinositol 3-kinase catalytic subunit type 3"/>
    <property type="match status" value="1"/>
</dbReference>
<dbReference type="FunFam" id="1.25.40.70:FF:000019">
    <property type="entry name" value="Phosphatidylinositol 3-kinase VPS34"/>
    <property type="match status" value="1"/>
</dbReference>
<dbReference type="Gene3D" id="1.10.1070.11">
    <property type="entry name" value="Phosphatidylinositol 3-/4-kinase, catalytic domain"/>
    <property type="match status" value="1"/>
</dbReference>
<dbReference type="Gene3D" id="3.30.1010.10">
    <property type="entry name" value="Phosphatidylinositol 3-kinase Catalytic Subunit, Chain A, domain 4"/>
    <property type="match status" value="1"/>
</dbReference>
<dbReference type="Gene3D" id="1.25.40.70">
    <property type="entry name" value="Phosphatidylinositol 3-kinase, accessory domain (PIK)"/>
    <property type="match status" value="1"/>
</dbReference>
<dbReference type="InterPro" id="IPR016024">
    <property type="entry name" value="ARM-type_fold"/>
</dbReference>
<dbReference type="InterPro" id="IPR035892">
    <property type="entry name" value="C2_domain_sf"/>
</dbReference>
<dbReference type="InterPro" id="IPR011009">
    <property type="entry name" value="Kinase-like_dom_sf"/>
</dbReference>
<dbReference type="InterPro" id="IPR000403">
    <property type="entry name" value="PI3/4_kinase_cat_dom"/>
</dbReference>
<dbReference type="InterPro" id="IPR036940">
    <property type="entry name" value="PI3/4_kinase_cat_sf"/>
</dbReference>
<dbReference type="InterPro" id="IPR018936">
    <property type="entry name" value="PI3/4_kinase_CS"/>
</dbReference>
<dbReference type="InterPro" id="IPR002420">
    <property type="entry name" value="PI3K-type_C2_dom"/>
</dbReference>
<dbReference type="InterPro" id="IPR001263">
    <property type="entry name" value="PI3K_accessory_dom"/>
</dbReference>
<dbReference type="InterPro" id="IPR042236">
    <property type="entry name" value="PI3K_accessory_sf"/>
</dbReference>
<dbReference type="InterPro" id="IPR008290">
    <property type="entry name" value="PI3K_Vps34"/>
</dbReference>
<dbReference type="InterPro" id="IPR015433">
    <property type="entry name" value="PI_Kinase"/>
</dbReference>
<dbReference type="PANTHER" id="PTHR10048:SF7">
    <property type="entry name" value="PHOSPHATIDYLINOSITOL 3-KINASE CATALYTIC SUBUNIT TYPE 3"/>
    <property type="match status" value="1"/>
</dbReference>
<dbReference type="PANTHER" id="PTHR10048">
    <property type="entry name" value="PHOSPHATIDYLINOSITOL KINASE"/>
    <property type="match status" value="1"/>
</dbReference>
<dbReference type="Pfam" id="PF00454">
    <property type="entry name" value="PI3_PI4_kinase"/>
    <property type="match status" value="1"/>
</dbReference>
<dbReference type="Pfam" id="PF00792">
    <property type="entry name" value="PI3K_C2"/>
    <property type="match status" value="1"/>
</dbReference>
<dbReference type="Pfam" id="PF00613">
    <property type="entry name" value="PI3Ka"/>
    <property type="match status" value="1"/>
</dbReference>
<dbReference type="PIRSF" id="PIRSF000587">
    <property type="entry name" value="PI3K_Vps34"/>
    <property type="match status" value="1"/>
</dbReference>
<dbReference type="SMART" id="SM00142">
    <property type="entry name" value="PI3K_C2"/>
    <property type="match status" value="1"/>
</dbReference>
<dbReference type="SMART" id="SM00145">
    <property type="entry name" value="PI3Ka"/>
    <property type="match status" value="1"/>
</dbReference>
<dbReference type="SMART" id="SM00146">
    <property type="entry name" value="PI3Kc"/>
    <property type="match status" value="1"/>
</dbReference>
<dbReference type="SUPFAM" id="SSF48371">
    <property type="entry name" value="ARM repeat"/>
    <property type="match status" value="1"/>
</dbReference>
<dbReference type="SUPFAM" id="SSF49562">
    <property type="entry name" value="C2 domain (Calcium/lipid-binding domain, CaLB)"/>
    <property type="match status" value="1"/>
</dbReference>
<dbReference type="SUPFAM" id="SSF56112">
    <property type="entry name" value="Protein kinase-like (PK-like)"/>
    <property type="match status" value="1"/>
</dbReference>
<dbReference type="PROSITE" id="PS51547">
    <property type="entry name" value="C2_PI3K"/>
    <property type="match status" value="1"/>
</dbReference>
<dbReference type="PROSITE" id="PS00916">
    <property type="entry name" value="PI3_4_KINASE_2"/>
    <property type="match status" value="1"/>
</dbReference>
<dbReference type="PROSITE" id="PS50290">
    <property type="entry name" value="PI3_4_KINASE_3"/>
    <property type="match status" value="1"/>
</dbReference>
<dbReference type="PROSITE" id="PS51545">
    <property type="entry name" value="PIK_HELICAL"/>
    <property type="match status" value="1"/>
</dbReference>
<sequence>MSGKSVSFYVSENIDVPLQIKILSLKGKKRQLRASEKLIDPQLSLTMSNVKIFSDMLVSVQVYDELTLGDVTVPVFAPYVPFRYGRNWDQWVTLPVSVRHLTPACKLRIVLWEFNGQRRIPFKTITTPIFKDLDFTLKRGIEAIKFTKQGKPSIETVKTLETINKYFYGDYAKKEWIDELVLKKLYKEYEKIDLPLDTFMLTIQFPVIELPIIYTEKPREDIQKNIPTLSNFDAASAFSVDHSTSNNTAVTSVDPKLKIPMGNKYNSTLKFYDPDQFNNDPIEEKFRKLERASKHNTSDKHVKPDAKKRDYLKKIIDYPPGKRLSAHEKGSIWKYRYYLQNNKKALTKLLQSTNLKDETERTEVLEMMDGWAEIDIDDALGLLGHKYRNLAVRTYAVNRLKKASDKELELYLLQLVQAVCFENLNTFSDTSNSKFTVVDFSSSSQMMKTRNTQRSESQNIMNSHIENNNPKFIHSIHSEDDSQIEELPVVISPLAEFLIRRALVNKRLGNYFYWYITSESYDQPFLNQILESFLSRLNSNDRNEIEKQVKLLTLLRNCCEEIKSLKDTVSKKKELLQTLLSTKVRPYLKKRLVKLPLDPDIVLNDVMIDQCNVFKSSLSPLMITFHTENGGVYPLMYKVGDDLRQDQLVVQIISLMNELLKNENVDLKLLPYTILATGLEEGAIQFIPNLTMADILNKYHGILPFFRAHHPDKDEELGVKSWVIDNFVKSCAGYCVITYLLGVGDRHLDNLLITEGGQFFHADFGYILGQDPKPFPPLMKLPPQIIEAFGGTDSSNYNKFRSYCFVAYSILRRNAGLILNLFELMKTSNIPDIRVDPEGSIMKVKERFNLDLTEEEATIHFQTLINDSVNALLPIVIDHLHNLAQYWRA</sequence>
<gene>
    <name evidence="6" type="primary">VPS34</name>
    <name type="ordered locus">CAGL0G08360g</name>
</gene>
<evidence type="ECO:0000250" key="1">
    <source>
        <dbReference type="UniProtKB" id="P22543"/>
    </source>
</evidence>
<evidence type="ECO:0000255" key="2">
    <source>
        <dbReference type="PROSITE-ProRule" id="PRU00269"/>
    </source>
</evidence>
<evidence type="ECO:0000255" key="3">
    <source>
        <dbReference type="PROSITE-ProRule" id="PRU00878"/>
    </source>
</evidence>
<evidence type="ECO:0000255" key="4">
    <source>
        <dbReference type="PROSITE-ProRule" id="PRU00880"/>
    </source>
</evidence>
<evidence type="ECO:0000269" key="5">
    <source>
    </source>
</evidence>
<evidence type="ECO:0000303" key="6">
    <source>
    </source>
</evidence>
<name>VPS34_CANGA</name>
<feature type="chain" id="PRO_0000458893" description="Phosphatidylinositol 3-kinase VPS34">
    <location>
        <begin position="1"/>
        <end position="889"/>
    </location>
</feature>
<feature type="domain" description="C2 PI3K-type" evidence="4">
    <location>
        <begin position="34"/>
        <end position="184"/>
    </location>
</feature>
<feature type="domain" description="PIK helical" evidence="3">
    <location>
        <begin position="298"/>
        <end position="540"/>
    </location>
</feature>
<feature type="domain" description="PI3K/PI4K catalytic" evidence="2">
    <location>
        <begin position="607"/>
        <end position="873"/>
    </location>
</feature>
<feature type="region of interest" description="G-loop" evidence="2">
    <location>
        <begin position="613"/>
        <end position="619"/>
    </location>
</feature>
<feature type="region of interest" description="Catalytic loop" evidence="2">
    <location>
        <begin position="742"/>
        <end position="750"/>
    </location>
</feature>
<feature type="region of interest" description="Activation loop" evidence="2">
    <location>
        <begin position="761"/>
        <end position="782"/>
    </location>
</feature>
<feature type="mutagenesis site" description="Impeairs the PI3K activity." evidence="5">
    <original>N</original>
    <variation>K</variation>
    <location>
        <position position="750"/>
    </location>
</feature>
<proteinExistence type="evidence at protein level"/>
<keyword id="KW-0067">ATP-binding</keyword>
<keyword id="KW-0072">Autophagy</keyword>
<keyword id="KW-0967">Endosome</keyword>
<keyword id="KW-0333">Golgi apparatus</keyword>
<keyword id="KW-0418">Kinase</keyword>
<keyword id="KW-0472">Membrane</keyword>
<keyword id="KW-0547">Nucleotide-binding</keyword>
<keyword id="KW-1185">Reference proteome</keyword>
<keyword id="KW-0808">Transferase</keyword>
<protein>
    <recommendedName>
        <fullName evidence="6">Phosphatidylinositol 3-kinase VPS34</fullName>
        <ecNumber evidence="5">2.7.1.137</ecNumber>
    </recommendedName>
</protein>
<organism>
    <name type="scientific">Candida glabrata (strain ATCC 2001 / BCRC 20586 / JCM 3761 / NBRC 0622 / NRRL Y-65 / CBS 138)</name>
    <name type="common">Yeast</name>
    <name type="synonym">Nakaseomyces glabratus</name>
    <dbReference type="NCBI Taxonomy" id="284593"/>
    <lineage>
        <taxon>Eukaryota</taxon>
        <taxon>Fungi</taxon>
        <taxon>Dikarya</taxon>
        <taxon>Ascomycota</taxon>
        <taxon>Saccharomycotina</taxon>
        <taxon>Saccharomycetes</taxon>
        <taxon>Saccharomycetales</taxon>
        <taxon>Saccharomycetaceae</taxon>
        <taxon>Nakaseomyces</taxon>
    </lineage>
</organism>